<sequence length="134" mass="15805">MDLRTGEVITAPQAMNGVYTWEINNPLYFTITRHQQRPFLLNQDIITVQVRFNHNLRKELGIHKCFLNFQIWTTLQPQTGLFLRVFRYQVIKYLDNIGVISINNVIRAADHVLFNVIANTIECKLTHEIKFNVY</sequence>
<organism>
    <name type="scientific">African cassava mosaic virus (isolate West Kenyan 844)</name>
    <name type="common">ACMV</name>
    <name type="synonym">Cassava latent virus (isolate West Kenyan 844)</name>
    <dbReference type="NCBI Taxonomy" id="10818"/>
    <lineage>
        <taxon>Viruses</taxon>
        <taxon>Monodnaviria</taxon>
        <taxon>Shotokuvirae</taxon>
        <taxon>Cressdnaviricota</taxon>
        <taxon>Repensiviricetes</taxon>
        <taxon>Geplafuvirales</taxon>
        <taxon>Geminiviridae</taxon>
        <taxon>Begomovirus</taxon>
        <taxon>Begomovirus manihotis</taxon>
    </lineage>
</organism>
<evidence type="ECO:0000250" key="1"/>
<evidence type="ECO:0000269" key="2">
    <source>
    </source>
</evidence>
<evidence type="ECO:0000305" key="3"/>
<organismHost>
    <name type="scientific">Hewittia sublobata</name>
    <dbReference type="NCBI Taxonomy" id="197394"/>
</organismHost>
<organismHost>
    <name type="scientific">Jatropha multifida</name>
    <name type="common">Coralbush</name>
    <dbReference type="NCBI Taxonomy" id="3996"/>
</organismHost>
<organismHost>
    <name type="scientific">Laportea</name>
    <dbReference type="NCBI Taxonomy" id="194268"/>
</organismHost>
<organismHost>
    <name type="scientific">Manihot esculenta</name>
    <name type="common">Cassava</name>
    <name type="synonym">Jatropha manihot</name>
    <dbReference type="NCBI Taxonomy" id="3983"/>
</organismHost>
<gene>
    <name type="ORF">AC3</name>
    <name type="ORF">AL3</name>
</gene>
<comment type="function">
    <text evidence="2">Increases viral DNA accumulation. Enhances infectivity and symptom expression.</text>
</comment>
<comment type="subunit">
    <text evidence="1">Homooligomer. Interacts with the replication-associated protein (REP). Interacts with host proliferating cell nuclear antigen (PCNA). Interacts with host retinoblastoma-related protein 1 (RBR1), and may thereby deregulate the host cell cycle. Oligomerization and interaction with PCNA are necessary for optimal replication enhancement (By similarity).</text>
</comment>
<comment type="similarity">
    <text evidence="3">Belongs to the geminiviridae replication enhancer protein family.</text>
</comment>
<feature type="chain" id="PRO_0000222239" description="Replication enhancer protein">
    <location>
        <begin position="1"/>
        <end position="134"/>
    </location>
</feature>
<keyword id="KW-0945">Host-virus interaction</keyword>
<proteinExistence type="inferred from homology"/>
<protein>
    <recommendedName>
        <fullName>Replication enhancer protein</fullName>
        <shortName>REn</shortName>
    </recommendedName>
    <alternativeName>
        <fullName>15.9 kDa protein</fullName>
    </alternativeName>
    <alternativeName>
        <fullName>Protein AC3</fullName>
    </alternativeName>
    <alternativeName>
        <fullName>Protein AL3</fullName>
    </alternativeName>
</protein>
<reference key="1">
    <citation type="journal article" date="1983" name="Nature">
        <title>Nucleotide sequence of cassava latent virus DNA.</title>
        <authorList>
            <person name="Stanley J."/>
            <person name="Gay M.R."/>
        </authorList>
    </citation>
    <scope>NUCLEOTIDE SEQUENCE [GENOMIC DNA]</scope>
</reference>
<reference key="2">
    <citation type="journal article" date="1991" name="J. Gen. Virol.">
        <title>Mutagenesis of the AC3 open reading frame of African cassava mosaic virus DNA A reduces DNA B replication and ameliorates disease symptoms.</title>
        <authorList>
            <person name="Morris B."/>
            <person name="Richardson K."/>
            <person name="Eddy P."/>
            <person name="Zhan X.C."/>
            <person name="Haley A."/>
            <person name="Gardner R."/>
        </authorList>
    </citation>
    <scope>FUNCTION</scope>
</reference>
<accession>P14977</accession>
<dbReference type="EMBL" id="J02057">
    <property type="status" value="NOT_ANNOTATED_CDS"/>
    <property type="molecule type" value="Genomic_DNA"/>
</dbReference>
<dbReference type="Proteomes" id="UP000008452">
    <property type="component" value="Genome"/>
</dbReference>
<dbReference type="GO" id="GO:0016032">
    <property type="term" value="P:viral process"/>
    <property type="evidence" value="ECO:0007669"/>
    <property type="project" value="InterPro"/>
</dbReference>
<dbReference type="InterPro" id="IPR000657">
    <property type="entry name" value="Gemini_AL3"/>
</dbReference>
<dbReference type="Pfam" id="PF01407">
    <property type="entry name" value="Gemini_AL3"/>
    <property type="match status" value="1"/>
</dbReference>
<dbReference type="PRINTS" id="PR00231">
    <property type="entry name" value="GEMCOATAL3"/>
</dbReference>
<name>REN_CLVK</name>